<gene>
    <name type="primary">Aldh4a1</name>
</gene>
<protein>
    <recommendedName>
        <fullName>Delta-1-pyrroline-5-carboxylate dehydrogenase, mitochondrial</fullName>
        <shortName>P5C dehydrogenase</shortName>
        <ecNumber>1.2.1.88</ecNumber>
    </recommendedName>
    <alternativeName>
        <fullName>Aldehyde dehydrogenase family 4 member A1</fullName>
    </alternativeName>
    <alternativeName>
        <fullName>L-glutamate gamma-semialdehyde dehydrogenase</fullName>
    </alternativeName>
</protein>
<reference key="1">
    <citation type="journal article" date="2004" name="Nature">
        <title>Genome sequence of the Brown Norway rat yields insights into mammalian evolution.</title>
        <authorList>
            <person name="Gibbs R.A."/>
            <person name="Weinstock G.M."/>
            <person name="Metzker M.L."/>
            <person name="Muzny D.M."/>
            <person name="Sodergren E.J."/>
            <person name="Scherer S."/>
            <person name="Scott G."/>
            <person name="Steffen D."/>
            <person name="Worley K.C."/>
            <person name="Burch P.E."/>
            <person name="Okwuonu G."/>
            <person name="Hines S."/>
            <person name="Lewis L."/>
            <person name="Deramo C."/>
            <person name="Delgado O."/>
            <person name="Dugan-Rocha S."/>
            <person name="Miner G."/>
            <person name="Morgan M."/>
            <person name="Hawes A."/>
            <person name="Gill R."/>
            <person name="Holt R.A."/>
            <person name="Adams M.D."/>
            <person name="Amanatides P.G."/>
            <person name="Baden-Tillson H."/>
            <person name="Barnstead M."/>
            <person name="Chin S."/>
            <person name="Evans C.A."/>
            <person name="Ferriera S."/>
            <person name="Fosler C."/>
            <person name="Glodek A."/>
            <person name="Gu Z."/>
            <person name="Jennings D."/>
            <person name="Kraft C.L."/>
            <person name="Nguyen T."/>
            <person name="Pfannkoch C.M."/>
            <person name="Sitter C."/>
            <person name="Sutton G.G."/>
            <person name="Venter J.C."/>
            <person name="Woodage T."/>
            <person name="Smith D."/>
            <person name="Lee H.-M."/>
            <person name="Gustafson E."/>
            <person name="Cahill P."/>
            <person name="Kana A."/>
            <person name="Doucette-Stamm L."/>
            <person name="Weinstock K."/>
            <person name="Fechtel K."/>
            <person name="Weiss R.B."/>
            <person name="Dunn D.M."/>
            <person name="Green E.D."/>
            <person name="Blakesley R.W."/>
            <person name="Bouffard G.G."/>
            <person name="De Jong P.J."/>
            <person name="Osoegawa K."/>
            <person name="Zhu B."/>
            <person name="Marra M."/>
            <person name="Schein J."/>
            <person name="Bosdet I."/>
            <person name="Fjell C."/>
            <person name="Jones S."/>
            <person name="Krzywinski M."/>
            <person name="Mathewson C."/>
            <person name="Siddiqui A."/>
            <person name="Wye N."/>
            <person name="McPherson J."/>
            <person name="Zhao S."/>
            <person name="Fraser C.M."/>
            <person name="Shetty J."/>
            <person name="Shatsman S."/>
            <person name="Geer K."/>
            <person name="Chen Y."/>
            <person name="Abramzon S."/>
            <person name="Nierman W.C."/>
            <person name="Havlak P.H."/>
            <person name="Chen R."/>
            <person name="Durbin K.J."/>
            <person name="Egan A."/>
            <person name="Ren Y."/>
            <person name="Song X.-Z."/>
            <person name="Li B."/>
            <person name="Liu Y."/>
            <person name="Qin X."/>
            <person name="Cawley S."/>
            <person name="Cooney A.J."/>
            <person name="D'Souza L.M."/>
            <person name="Martin K."/>
            <person name="Wu J.Q."/>
            <person name="Gonzalez-Garay M.L."/>
            <person name="Jackson A.R."/>
            <person name="Kalafus K.J."/>
            <person name="McLeod M.P."/>
            <person name="Milosavljevic A."/>
            <person name="Virk D."/>
            <person name="Volkov A."/>
            <person name="Wheeler D.A."/>
            <person name="Zhang Z."/>
            <person name="Bailey J.A."/>
            <person name="Eichler E.E."/>
            <person name="Tuzun E."/>
            <person name="Birney E."/>
            <person name="Mongin E."/>
            <person name="Ureta-Vidal A."/>
            <person name="Woodwark C."/>
            <person name="Zdobnov E."/>
            <person name="Bork P."/>
            <person name="Suyama M."/>
            <person name="Torrents D."/>
            <person name="Alexandersson M."/>
            <person name="Trask B.J."/>
            <person name="Young J.M."/>
            <person name="Huang H."/>
            <person name="Wang H."/>
            <person name="Xing H."/>
            <person name="Daniels S."/>
            <person name="Gietzen D."/>
            <person name="Schmidt J."/>
            <person name="Stevens K."/>
            <person name="Vitt U."/>
            <person name="Wingrove J."/>
            <person name="Camara F."/>
            <person name="Mar Alba M."/>
            <person name="Abril J.F."/>
            <person name="Guigo R."/>
            <person name="Smit A."/>
            <person name="Dubchak I."/>
            <person name="Rubin E.M."/>
            <person name="Couronne O."/>
            <person name="Poliakov A."/>
            <person name="Huebner N."/>
            <person name="Ganten D."/>
            <person name="Goesele C."/>
            <person name="Hummel O."/>
            <person name="Kreitler T."/>
            <person name="Lee Y.-A."/>
            <person name="Monti J."/>
            <person name="Schulz H."/>
            <person name="Zimdahl H."/>
            <person name="Himmelbauer H."/>
            <person name="Lehrach H."/>
            <person name="Jacob H.J."/>
            <person name="Bromberg S."/>
            <person name="Gullings-Handley J."/>
            <person name="Jensen-Seaman M.I."/>
            <person name="Kwitek A.E."/>
            <person name="Lazar J."/>
            <person name="Pasko D."/>
            <person name="Tonellato P.J."/>
            <person name="Twigger S."/>
            <person name="Ponting C.P."/>
            <person name="Duarte J.M."/>
            <person name="Rice S."/>
            <person name="Goodstadt L."/>
            <person name="Beatson S.A."/>
            <person name="Emes R.D."/>
            <person name="Winter E.E."/>
            <person name="Webber C."/>
            <person name="Brandt P."/>
            <person name="Nyakatura G."/>
            <person name="Adetobi M."/>
            <person name="Chiaromonte F."/>
            <person name="Elnitski L."/>
            <person name="Eswara P."/>
            <person name="Hardison R.C."/>
            <person name="Hou M."/>
            <person name="Kolbe D."/>
            <person name="Makova K."/>
            <person name="Miller W."/>
            <person name="Nekrutenko A."/>
            <person name="Riemer C."/>
            <person name="Schwartz S."/>
            <person name="Taylor J."/>
            <person name="Yang S."/>
            <person name="Zhang Y."/>
            <person name="Lindpaintner K."/>
            <person name="Andrews T.D."/>
            <person name="Caccamo M."/>
            <person name="Clamp M."/>
            <person name="Clarke L."/>
            <person name="Curwen V."/>
            <person name="Durbin R.M."/>
            <person name="Eyras E."/>
            <person name="Searle S.M."/>
            <person name="Cooper G.M."/>
            <person name="Batzoglou S."/>
            <person name="Brudno M."/>
            <person name="Sidow A."/>
            <person name="Stone E.A."/>
            <person name="Payseur B.A."/>
            <person name="Bourque G."/>
            <person name="Lopez-Otin C."/>
            <person name="Puente X.S."/>
            <person name="Chakrabarti K."/>
            <person name="Chatterji S."/>
            <person name="Dewey C."/>
            <person name="Pachter L."/>
            <person name="Bray N."/>
            <person name="Yap V.B."/>
            <person name="Caspi A."/>
            <person name="Tesler G."/>
            <person name="Pevzner P.A."/>
            <person name="Haussler D."/>
            <person name="Roskin K.M."/>
            <person name="Baertsch R."/>
            <person name="Clawson H."/>
            <person name="Furey T.S."/>
            <person name="Hinrichs A.S."/>
            <person name="Karolchik D."/>
            <person name="Kent W.J."/>
            <person name="Rosenbloom K.R."/>
            <person name="Trumbower H."/>
            <person name="Weirauch M."/>
            <person name="Cooper D.N."/>
            <person name="Stenson P.D."/>
            <person name="Ma B."/>
            <person name="Brent M."/>
            <person name="Arumugam M."/>
            <person name="Shteynberg D."/>
            <person name="Copley R.R."/>
            <person name="Taylor M.S."/>
            <person name="Riethman H."/>
            <person name="Mudunuri U."/>
            <person name="Peterson J."/>
            <person name="Guyer M."/>
            <person name="Felsenfeld A."/>
            <person name="Old S."/>
            <person name="Mockrin S."/>
            <person name="Collins F.S."/>
        </authorList>
    </citation>
    <scope>NUCLEOTIDE SEQUENCE [LARGE SCALE GENOMIC DNA]</scope>
    <source>
        <strain>Brown Norway</strain>
    </source>
</reference>
<reference key="2">
    <citation type="submission" date="2007-04" db="UniProtKB">
        <authorList>
            <person name="Lubec G."/>
            <person name="Chen W.-Q."/>
        </authorList>
    </citation>
    <scope>PROTEIN SEQUENCE OF 79-89 AND 318-337</scope>
    <scope>IDENTIFICATION BY MASS SPECTROMETRY</scope>
    <source>
        <strain>Sprague-Dawley</strain>
        <tissue>Hippocampus</tissue>
    </source>
</reference>
<feature type="transit peptide" description="Mitochondrion" evidence="1">
    <location>
        <begin position="1"/>
        <end position="23"/>
    </location>
</feature>
<feature type="chain" id="PRO_0000287827" description="Delta-1-pyrroline-5-carboxylate dehydrogenase, mitochondrial">
    <location>
        <begin position="24"/>
        <end position="563"/>
    </location>
</feature>
<feature type="active site" description="Proton acceptor" evidence="4 5">
    <location>
        <position position="313"/>
    </location>
</feature>
<feature type="active site" description="Nucleophile" evidence="4 5">
    <location>
        <position position="347"/>
    </location>
</feature>
<feature type="binding site" evidence="1">
    <location>
        <position position="207"/>
    </location>
    <ligand>
        <name>NAD(+)</name>
        <dbReference type="ChEBI" id="CHEBI:57540"/>
    </ligand>
</feature>
<feature type="binding site" evidence="1">
    <location>
        <position position="232"/>
    </location>
    <ligand>
        <name>NAD(+)</name>
        <dbReference type="ChEBI" id="CHEBI:57540"/>
    </ligand>
</feature>
<feature type="binding site" evidence="1">
    <location>
        <begin position="285"/>
        <end position="289"/>
    </location>
    <ligand>
        <name>NAD(+)</name>
        <dbReference type="ChEBI" id="CHEBI:57540"/>
    </ligand>
</feature>
<feature type="binding site" evidence="1">
    <location>
        <position position="446"/>
    </location>
    <ligand>
        <name>NAD(+)</name>
        <dbReference type="ChEBI" id="CHEBI:57540"/>
    </ligand>
</feature>
<feature type="binding site" evidence="1">
    <location>
        <position position="512"/>
    </location>
    <ligand>
        <name>substrate</name>
    </ligand>
</feature>
<feature type="site" description="Transition state stabilizer" evidence="1">
    <location>
        <position position="210"/>
    </location>
</feature>
<feature type="modified residue" description="N6-succinyllysine" evidence="3">
    <location>
        <position position="30"/>
    </location>
</feature>
<feature type="modified residue" description="Phosphoserine" evidence="2">
    <location>
        <position position="43"/>
    </location>
</feature>
<feature type="modified residue" description="N6-acetyllysine" evidence="3">
    <location>
        <position position="51"/>
    </location>
</feature>
<feature type="modified residue" description="N6-acetyllysine; alternate" evidence="3">
    <location>
        <position position="92"/>
    </location>
</feature>
<feature type="modified residue" description="N6-succinyllysine; alternate" evidence="3">
    <location>
        <position position="92"/>
    </location>
</feature>
<feature type="modified residue" description="N6-acetyllysine; alternate" evidence="3">
    <location>
        <position position="98"/>
    </location>
</feature>
<feature type="modified residue" description="N6-succinyllysine; alternate" evidence="3">
    <location>
        <position position="98"/>
    </location>
</feature>
<feature type="modified residue" description="N6-acetyllysine; alternate" evidence="3">
    <location>
        <position position="113"/>
    </location>
</feature>
<feature type="modified residue" description="N6-succinyllysine; alternate" evidence="3">
    <location>
        <position position="113"/>
    </location>
</feature>
<feature type="modified residue" description="N6-acetyllysine; alternate" evidence="3">
    <location>
        <position position="129"/>
    </location>
</feature>
<feature type="modified residue" description="N6-succinyllysine; alternate" evidence="3">
    <location>
        <position position="129"/>
    </location>
</feature>
<feature type="modified residue" description="N6-acetyllysine; alternate" evidence="3">
    <location>
        <position position="174"/>
    </location>
</feature>
<feature type="modified residue" description="N6-succinyllysine; alternate" evidence="3">
    <location>
        <position position="174"/>
    </location>
</feature>
<feature type="modified residue" description="N6-acetyllysine" evidence="3">
    <location>
        <position position="317"/>
    </location>
</feature>
<feature type="modified residue" description="N6-succinyllysine" evidence="3">
    <location>
        <position position="346"/>
    </location>
</feature>
<feature type="modified residue" description="N6-acetyllysine" evidence="3">
    <location>
        <position position="364"/>
    </location>
</feature>
<feature type="modified residue" description="N6-acetyllysine" evidence="3">
    <location>
        <position position="375"/>
    </location>
</feature>
<feature type="modified residue" description="N6-succinyllysine" evidence="3">
    <location>
        <position position="394"/>
    </location>
</feature>
<feature type="modified residue" description="N6-acetyllysine" evidence="3">
    <location>
        <position position="461"/>
    </location>
</feature>
<feature type="modified residue" description="N6-acetyllysine; alternate" evidence="3">
    <location>
        <position position="508"/>
    </location>
</feature>
<feature type="modified residue" description="N6-succinyllysine; alternate" evidence="3">
    <location>
        <position position="508"/>
    </location>
</feature>
<keyword id="KW-0007">Acetylation</keyword>
<keyword id="KW-0903">Direct protein sequencing</keyword>
<keyword id="KW-0496">Mitochondrion</keyword>
<keyword id="KW-0520">NAD</keyword>
<keyword id="KW-0560">Oxidoreductase</keyword>
<keyword id="KW-0597">Phosphoprotein</keyword>
<keyword id="KW-0642">Proline metabolism</keyword>
<keyword id="KW-1185">Reference proteome</keyword>
<keyword id="KW-0809">Transit peptide</keyword>
<sequence length="563" mass="61869">MLPPALLRRSLLSYAWRGSGLRWKHASSLKVANEPILAFTQGSPERDALQKALNDLKDQTEAIPCVVGDEEVWTSDVRYQLSPFNHGHKVAKFCYADKALLNKAIEAAVLARKEWDLKPVADRAQIFLKAADMLSGPRRAEILAKTMVGQGKTVIQAEIDAAAELIDFFRFNAKFAVELEGEQPISVPPSTNHVVYRGLEGFVAAISPFNFTAIGGNLAGAPALMGNVVLWKPSDTAMLASYAVYRILREAGLPPNVIQFVPADGPTFGDTVTSSEHLCGINFTGSVPTFKHLWKQVAQNLDRFRTFPRLAGECGGKNFHFVHSSADVDSVVSGTLRSAFEYGGQKCSACSRLYVPQSLWPQIKGRLLEEHSRIKVGNPAEDFGTFFSAVIDAKAFARIKKWLEHARSSPSLSILAGGQCNESVGYFVEPCIIESKDPQEPIMKEEIFGPVLTVYVYPDEKYRETLQLVDSTTSYGLTGAVFAQDKTIVQEATRMLRNAAGNFYINDKSTGSVVGQQPFGGARASGERDIPGQPRLVQLWTEPPFTPLAVSPPLGDWRYSYMQ</sequence>
<name>AL4A1_RAT</name>
<accession>P0C2X9</accession>
<organism>
    <name type="scientific">Rattus norvegicus</name>
    <name type="common">Rat</name>
    <dbReference type="NCBI Taxonomy" id="10116"/>
    <lineage>
        <taxon>Eukaryota</taxon>
        <taxon>Metazoa</taxon>
        <taxon>Chordata</taxon>
        <taxon>Craniata</taxon>
        <taxon>Vertebrata</taxon>
        <taxon>Euteleostomi</taxon>
        <taxon>Mammalia</taxon>
        <taxon>Eutheria</taxon>
        <taxon>Euarchontoglires</taxon>
        <taxon>Glires</taxon>
        <taxon>Rodentia</taxon>
        <taxon>Myomorpha</taxon>
        <taxon>Muroidea</taxon>
        <taxon>Muridae</taxon>
        <taxon>Murinae</taxon>
        <taxon>Rattus</taxon>
    </lineage>
</organism>
<proteinExistence type="evidence at protein level"/>
<dbReference type="EC" id="1.2.1.88"/>
<dbReference type="EMBL" id="AABR03107656">
    <property type="status" value="NOT_ANNOTATED_CDS"/>
    <property type="molecule type" value="Genomic_DNA"/>
</dbReference>
<dbReference type="SMR" id="P0C2X9"/>
<dbReference type="FunCoup" id="P0C2X9">
    <property type="interactions" value="1960"/>
</dbReference>
<dbReference type="STRING" id="10116.ENSRNOP00000069221"/>
<dbReference type="iPTMnet" id="P0C2X9"/>
<dbReference type="PhosphoSitePlus" id="P0C2X9"/>
<dbReference type="SwissPalm" id="P0C2X9"/>
<dbReference type="jPOST" id="P0C2X9"/>
<dbReference type="PaxDb" id="10116-ENSRNOP00000062857"/>
<dbReference type="UCSC" id="RGD:1624206">
    <property type="organism name" value="rat"/>
</dbReference>
<dbReference type="AGR" id="RGD:1624206"/>
<dbReference type="RGD" id="1624206">
    <property type="gene designation" value="Aldh4a1"/>
</dbReference>
<dbReference type="eggNOG" id="KOG1056">
    <property type="taxonomic scope" value="Eukaryota"/>
</dbReference>
<dbReference type="eggNOG" id="KOG2455">
    <property type="taxonomic scope" value="Eukaryota"/>
</dbReference>
<dbReference type="InParanoid" id="P0C2X9"/>
<dbReference type="PhylomeDB" id="P0C2X9"/>
<dbReference type="Reactome" id="R-RNO-389661">
    <property type="pathway name" value="Glyoxylate metabolism and glycine degradation"/>
</dbReference>
<dbReference type="Reactome" id="R-RNO-70688">
    <property type="pathway name" value="Proline catabolism"/>
</dbReference>
<dbReference type="SABIO-RK" id="P0C2X9"/>
<dbReference type="UniPathway" id="UPA00261">
    <property type="reaction ID" value="UER00374"/>
</dbReference>
<dbReference type="PRO" id="PR:P0C2X9"/>
<dbReference type="Proteomes" id="UP000002494">
    <property type="component" value="Unplaced"/>
</dbReference>
<dbReference type="GO" id="GO:0005759">
    <property type="term" value="C:mitochondrial matrix"/>
    <property type="evidence" value="ECO:0007669"/>
    <property type="project" value="UniProtKB-SubCell"/>
</dbReference>
<dbReference type="GO" id="GO:0003842">
    <property type="term" value="F:1-pyrroline-5-carboxylate dehydrogenase activity"/>
    <property type="evidence" value="ECO:0000266"/>
    <property type="project" value="RGD"/>
</dbReference>
<dbReference type="GO" id="GO:0004029">
    <property type="term" value="F:aldehyde dehydrogenase (NAD+) activity"/>
    <property type="evidence" value="ECO:0000266"/>
    <property type="project" value="RGD"/>
</dbReference>
<dbReference type="GO" id="GO:0042802">
    <property type="term" value="F:identical protein binding"/>
    <property type="evidence" value="ECO:0000266"/>
    <property type="project" value="RGD"/>
</dbReference>
<dbReference type="GO" id="GO:0010133">
    <property type="term" value="P:proline catabolic process to glutamate"/>
    <property type="evidence" value="ECO:0007669"/>
    <property type="project" value="UniProtKB-UniPathway"/>
</dbReference>
<dbReference type="CDD" id="cd07123">
    <property type="entry name" value="ALDH_F4-17_P5CDH"/>
    <property type="match status" value="1"/>
</dbReference>
<dbReference type="FunFam" id="3.40.605.10:FF:000006">
    <property type="entry name" value="1-pyrroline-5-carboxylate dehydrogenase"/>
    <property type="match status" value="1"/>
</dbReference>
<dbReference type="FunFam" id="3.40.309.10:FF:000005">
    <property type="entry name" value="1-pyrroline-5-carboxylate dehydrogenase 1"/>
    <property type="match status" value="1"/>
</dbReference>
<dbReference type="Gene3D" id="3.40.605.10">
    <property type="entry name" value="Aldehyde Dehydrogenase, Chain A, domain 1"/>
    <property type="match status" value="1"/>
</dbReference>
<dbReference type="Gene3D" id="3.40.309.10">
    <property type="entry name" value="Aldehyde Dehydrogenase, Chain A, domain 2"/>
    <property type="match status" value="1"/>
</dbReference>
<dbReference type="InterPro" id="IPR016161">
    <property type="entry name" value="Ald_DH/histidinol_DH"/>
</dbReference>
<dbReference type="InterPro" id="IPR016163">
    <property type="entry name" value="Ald_DH_C"/>
</dbReference>
<dbReference type="InterPro" id="IPR016160">
    <property type="entry name" value="Ald_DH_CS_CYS"/>
</dbReference>
<dbReference type="InterPro" id="IPR029510">
    <property type="entry name" value="Ald_DH_CS_GLU"/>
</dbReference>
<dbReference type="InterPro" id="IPR016162">
    <property type="entry name" value="Ald_DH_N"/>
</dbReference>
<dbReference type="InterPro" id="IPR015590">
    <property type="entry name" value="Aldehyde_DH_dom"/>
</dbReference>
<dbReference type="InterPro" id="IPR005931">
    <property type="entry name" value="P5CDH/ALDH4A1"/>
</dbReference>
<dbReference type="NCBIfam" id="TIGR01236">
    <property type="entry name" value="D1pyr5carbox1"/>
    <property type="match status" value="1"/>
</dbReference>
<dbReference type="PANTHER" id="PTHR14516">
    <property type="entry name" value="1-PYRROLINE-5-CARBOXYLATE DEHYDROGENASE FAMILY MEMBER"/>
    <property type="match status" value="1"/>
</dbReference>
<dbReference type="PANTHER" id="PTHR14516:SF3">
    <property type="entry name" value="DELTA-1-PYRROLINE-5-CARBOXYLATE DEHYDROGENASE, MITOCHONDRIAL"/>
    <property type="match status" value="1"/>
</dbReference>
<dbReference type="Pfam" id="PF00171">
    <property type="entry name" value="Aldedh"/>
    <property type="match status" value="1"/>
</dbReference>
<dbReference type="SUPFAM" id="SSF53720">
    <property type="entry name" value="ALDH-like"/>
    <property type="match status" value="1"/>
</dbReference>
<dbReference type="PROSITE" id="PS00070">
    <property type="entry name" value="ALDEHYDE_DEHYDR_CYS"/>
    <property type="match status" value="1"/>
</dbReference>
<dbReference type="PROSITE" id="PS00687">
    <property type="entry name" value="ALDEHYDE_DEHYDR_GLU"/>
    <property type="match status" value="1"/>
</dbReference>
<evidence type="ECO:0000250" key="1"/>
<evidence type="ECO:0000250" key="2">
    <source>
        <dbReference type="UniProtKB" id="P30038"/>
    </source>
</evidence>
<evidence type="ECO:0000250" key="3">
    <source>
        <dbReference type="UniProtKB" id="Q8CHT0"/>
    </source>
</evidence>
<evidence type="ECO:0000255" key="4">
    <source>
        <dbReference type="PROSITE-ProRule" id="PRU10007"/>
    </source>
</evidence>
<evidence type="ECO:0000255" key="5">
    <source>
        <dbReference type="PROSITE-ProRule" id="PRU10008"/>
    </source>
</evidence>
<evidence type="ECO:0000305" key="6"/>
<comment type="function">
    <text evidence="1">Irreversible conversion of delta-1-pyrroline-5-carboxylate (P5C), derived either from proline or ornithine, to glutamate. This is a necessary step in the pathway interconnecting the urea and tricarboxylic acid cycles. The preferred substrate is glutamic gamma-semialdehyde, other substrates include succinic, glutaric and adipic semialdehydes (By similarity).</text>
</comment>
<comment type="catalytic activity">
    <reaction>
        <text>L-glutamate 5-semialdehyde + NAD(+) + H2O = L-glutamate + NADH + 2 H(+)</text>
        <dbReference type="Rhea" id="RHEA:30235"/>
        <dbReference type="ChEBI" id="CHEBI:15377"/>
        <dbReference type="ChEBI" id="CHEBI:15378"/>
        <dbReference type="ChEBI" id="CHEBI:29985"/>
        <dbReference type="ChEBI" id="CHEBI:57540"/>
        <dbReference type="ChEBI" id="CHEBI:57945"/>
        <dbReference type="ChEBI" id="CHEBI:58066"/>
        <dbReference type="EC" id="1.2.1.88"/>
    </reaction>
</comment>
<comment type="pathway">
    <text>Amino-acid degradation; L-proline degradation into L-glutamate; L-glutamate from L-proline: step 2/2.</text>
</comment>
<comment type="subunit">
    <text evidence="1">Homodimer.</text>
</comment>
<comment type="subcellular location">
    <subcellularLocation>
        <location evidence="1">Mitochondrion matrix</location>
    </subcellularLocation>
</comment>
<comment type="similarity">
    <text evidence="6">Belongs to the aldehyde dehydrogenase family.</text>
</comment>